<keyword id="KW-0687">Ribonucleoprotein</keyword>
<keyword id="KW-0689">Ribosomal protein</keyword>
<feature type="chain" id="PRO_1000049232" description="Small ribosomal subunit protein bS16">
    <location>
        <begin position="1"/>
        <end position="81"/>
    </location>
</feature>
<accession>A4XLF4</accession>
<gene>
    <name evidence="1" type="primary">rpsP</name>
    <name type="ordered locus">Csac_2157</name>
</gene>
<evidence type="ECO:0000255" key="1">
    <source>
        <dbReference type="HAMAP-Rule" id="MF_00385"/>
    </source>
</evidence>
<evidence type="ECO:0000305" key="2"/>
<name>RS16_CALS8</name>
<organism>
    <name type="scientific">Caldicellulosiruptor saccharolyticus (strain ATCC 43494 / DSM 8903 / Tp8T 6331)</name>
    <dbReference type="NCBI Taxonomy" id="351627"/>
    <lineage>
        <taxon>Bacteria</taxon>
        <taxon>Bacillati</taxon>
        <taxon>Bacillota</taxon>
        <taxon>Bacillota incertae sedis</taxon>
        <taxon>Caldicellulosiruptorales</taxon>
        <taxon>Caldicellulosiruptoraceae</taxon>
        <taxon>Caldicellulosiruptor</taxon>
    </lineage>
</organism>
<reference key="1">
    <citation type="submission" date="2007-04" db="EMBL/GenBank/DDBJ databases">
        <title>Genome sequence of the thermophilic hydrogen-producing bacterium Caldicellulosiruptor saccharolyticus DSM 8903.</title>
        <authorList>
            <person name="Copeland A."/>
            <person name="Lucas S."/>
            <person name="Lapidus A."/>
            <person name="Barry K."/>
            <person name="Detter J.C."/>
            <person name="Glavina del Rio T."/>
            <person name="Hammon N."/>
            <person name="Israni S."/>
            <person name="Dalin E."/>
            <person name="Tice H."/>
            <person name="Pitluck S."/>
            <person name="Kiss H."/>
            <person name="Brettin T."/>
            <person name="Bruce D."/>
            <person name="Han C."/>
            <person name="Schmutz J."/>
            <person name="Larimer F."/>
            <person name="Land M."/>
            <person name="Hauser L."/>
            <person name="Kyrpides N."/>
            <person name="Lykidis A."/>
            <person name="van de Werken H.J.G."/>
            <person name="Verhaart M.R.A."/>
            <person name="VanFossen A.L."/>
            <person name="Lewis D.L."/>
            <person name="Nichols J.D."/>
            <person name="Goorissen H.P."/>
            <person name="van Niel E.W.J."/>
            <person name="Stams F.J.M."/>
            <person name="Willquist K.U."/>
            <person name="Ward D.E."/>
            <person name="van der Oost J."/>
            <person name="Kelly R.M."/>
            <person name="Kengen S.M.W."/>
            <person name="Richardson P."/>
        </authorList>
    </citation>
    <scope>NUCLEOTIDE SEQUENCE [LARGE SCALE GENOMIC DNA]</scope>
    <source>
        <strain>ATCC 43494 / DSM 8903 / Tp8T 6331</strain>
    </source>
</reference>
<dbReference type="EMBL" id="CP000679">
    <property type="protein sequence ID" value="ABP67739.1"/>
    <property type="molecule type" value="Genomic_DNA"/>
</dbReference>
<dbReference type="RefSeq" id="WP_011917670.1">
    <property type="nucleotide sequence ID" value="NC_009437.1"/>
</dbReference>
<dbReference type="SMR" id="A4XLF4"/>
<dbReference type="STRING" id="351627.Csac_2157"/>
<dbReference type="KEGG" id="csc:Csac_2157"/>
<dbReference type="eggNOG" id="COG0228">
    <property type="taxonomic scope" value="Bacteria"/>
</dbReference>
<dbReference type="HOGENOM" id="CLU_100590_5_0_9"/>
<dbReference type="OrthoDB" id="9807878at2"/>
<dbReference type="Proteomes" id="UP000000256">
    <property type="component" value="Chromosome"/>
</dbReference>
<dbReference type="GO" id="GO:0005737">
    <property type="term" value="C:cytoplasm"/>
    <property type="evidence" value="ECO:0007669"/>
    <property type="project" value="UniProtKB-ARBA"/>
</dbReference>
<dbReference type="GO" id="GO:0015935">
    <property type="term" value="C:small ribosomal subunit"/>
    <property type="evidence" value="ECO:0007669"/>
    <property type="project" value="TreeGrafter"/>
</dbReference>
<dbReference type="GO" id="GO:0003735">
    <property type="term" value="F:structural constituent of ribosome"/>
    <property type="evidence" value="ECO:0007669"/>
    <property type="project" value="InterPro"/>
</dbReference>
<dbReference type="GO" id="GO:0006412">
    <property type="term" value="P:translation"/>
    <property type="evidence" value="ECO:0007669"/>
    <property type="project" value="UniProtKB-UniRule"/>
</dbReference>
<dbReference type="FunFam" id="3.30.1320.10:FF:000005">
    <property type="entry name" value="30S ribosomal protein S16"/>
    <property type="match status" value="1"/>
</dbReference>
<dbReference type="Gene3D" id="3.30.1320.10">
    <property type="match status" value="1"/>
</dbReference>
<dbReference type="HAMAP" id="MF_00385">
    <property type="entry name" value="Ribosomal_bS16"/>
    <property type="match status" value="1"/>
</dbReference>
<dbReference type="InterPro" id="IPR000307">
    <property type="entry name" value="Ribosomal_bS16"/>
</dbReference>
<dbReference type="InterPro" id="IPR020592">
    <property type="entry name" value="Ribosomal_bS16_CS"/>
</dbReference>
<dbReference type="InterPro" id="IPR023803">
    <property type="entry name" value="Ribosomal_bS16_dom_sf"/>
</dbReference>
<dbReference type="NCBIfam" id="TIGR00002">
    <property type="entry name" value="S16"/>
    <property type="match status" value="1"/>
</dbReference>
<dbReference type="PANTHER" id="PTHR12919">
    <property type="entry name" value="30S RIBOSOMAL PROTEIN S16"/>
    <property type="match status" value="1"/>
</dbReference>
<dbReference type="PANTHER" id="PTHR12919:SF20">
    <property type="entry name" value="SMALL RIBOSOMAL SUBUNIT PROTEIN BS16M"/>
    <property type="match status" value="1"/>
</dbReference>
<dbReference type="Pfam" id="PF00886">
    <property type="entry name" value="Ribosomal_S16"/>
    <property type="match status" value="1"/>
</dbReference>
<dbReference type="SUPFAM" id="SSF54565">
    <property type="entry name" value="Ribosomal protein S16"/>
    <property type="match status" value="1"/>
</dbReference>
<dbReference type="PROSITE" id="PS00732">
    <property type="entry name" value="RIBOSOMAL_S16"/>
    <property type="match status" value="1"/>
</dbReference>
<comment type="similarity">
    <text evidence="1">Belongs to the bacterial ribosomal protein bS16 family.</text>
</comment>
<sequence length="81" mass="9140">MAVRIRLKRMGAKNNPFYRIVVADSRSPRDGKTIDEIGYYNPLKNPADIKVDVEKAKKWLSNGAQPTDTVKILLKKVGVIE</sequence>
<proteinExistence type="inferred from homology"/>
<protein>
    <recommendedName>
        <fullName evidence="1">Small ribosomal subunit protein bS16</fullName>
    </recommendedName>
    <alternativeName>
        <fullName evidence="2">30S ribosomal protein S16</fullName>
    </alternativeName>
</protein>